<organism>
    <name type="scientific">Arabidopsis thaliana</name>
    <name type="common">Mouse-ear cress</name>
    <dbReference type="NCBI Taxonomy" id="3702"/>
    <lineage>
        <taxon>Eukaryota</taxon>
        <taxon>Viridiplantae</taxon>
        <taxon>Streptophyta</taxon>
        <taxon>Embryophyta</taxon>
        <taxon>Tracheophyta</taxon>
        <taxon>Spermatophyta</taxon>
        <taxon>Magnoliopsida</taxon>
        <taxon>eudicotyledons</taxon>
        <taxon>Gunneridae</taxon>
        <taxon>Pentapetalae</taxon>
        <taxon>rosids</taxon>
        <taxon>malvids</taxon>
        <taxon>Brassicales</taxon>
        <taxon>Brassicaceae</taxon>
        <taxon>Camelineae</taxon>
        <taxon>Arabidopsis</taxon>
    </lineage>
</organism>
<protein>
    <recommendedName>
        <fullName>ATP-dependent DNA helicase 2 subunit KU80</fullName>
        <ecNumber>3.6.4.12</ecNumber>
    </recommendedName>
    <alternativeName>
        <fullName>ATP-dependent DNA helicase 2 subunit 2</fullName>
    </alternativeName>
    <alternativeName>
        <fullName>ATP-dependent DNA helicase II 80 kDa subunit</fullName>
    </alternativeName>
</protein>
<proteinExistence type="evidence at protein level"/>
<comment type="function">
    <text evidence="1 3 4 6">Single-stranded DNA-dependent ATP-dependent helicase. Involved in DNA non-homologous end joining (NHEJ) required for double-strand break repair. When associated with KU70, binds to double-stranded telomeric and non-telomeric DNA sequences, but not to single-stranded DNA. Plays a role in maintaining telomere length. Acts as a negative regulator of telomerase. Binds to and recombines double-stranded T-DNA molecules.</text>
</comment>
<comment type="catalytic activity">
    <reaction>
        <text>ATP + H2O = ADP + phosphate + H(+)</text>
        <dbReference type="Rhea" id="RHEA:13065"/>
        <dbReference type="ChEBI" id="CHEBI:15377"/>
        <dbReference type="ChEBI" id="CHEBI:15378"/>
        <dbReference type="ChEBI" id="CHEBI:30616"/>
        <dbReference type="ChEBI" id="CHEBI:43474"/>
        <dbReference type="ChEBI" id="CHEBI:456216"/>
        <dbReference type="EC" id="3.6.4.12"/>
    </reaction>
</comment>
<comment type="subunit">
    <text evidence="1 2 3 7">Heterodimer with KU70. Interacts with WEX.</text>
</comment>
<comment type="interaction">
    <interactant intactId="EBI-926593">
        <id>Q9FQ09</id>
    </interactant>
    <interactant intactId="EBI-926580">
        <id>Q84LH3</id>
        <label>WEX</label>
    </interactant>
    <organismsDiffer>false</organismsDiffer>
    <experiments>2</experiments>
</comment>
<comment type="subcellular location">
    <subcellularLocation>
        <location evidence="2">Nucleus</location>
    </subcellularLocation>
    <subcellularLocation>
        <location evidence="2">Cytoplasm</location>
    </subcellularLocation>
    <text>Predominantly in the nucleus.</text>
</comment>
<comment type="tissue specificity">
    <text evidence="1 2">Expressed ubiquitously.</text>
</comment>
<comment type="induction">
    <text evidence="2 8">Up-regulated in response to induction of double-strand breaks. Down-regulated by heat shock.</text>
</comment>
<comment type="disruption phenotype">
    <text evidence="3 4 5 6">No visible phenotype when grown under normal conditions. Hypersensitivity to ionising radiation (IR) and to DNA-damaging agents. Longer telomeres. Defective in T-DNA integration.</text>
</comment>
<comment type="similarity">
    <text evidence="9">Belongs to the ku80 family.</text>
</comment>
<comment type="sequence caution" evidence="9">
    <conflict type="erroneous gene model prediction">
        <sequence resource="EMBL-CDS" id="AAF79532"/>
    </conflict>
</comment>
<comment type="sequence caution" evidence="9">
    <conflict type="erroneous gene model prediction">
        <sequence resource="EMBL-CDS" id="AAG51535"/>
    </conflict>
</comment>
<feature type="chain" id="PRO_0000394131" description="ATP-dependent DNA helicase 2 subunit KU80">
    <location>
        <begin position="1"/>
        <end position="680"/>
    </location>
</feature>
<feature type="domain" description="Ku">
    <location>
        <begin position="224"/>
        <end position="432"/>
    </location>
</feature>
<reference key="1">
    <citation type="journal article" date="2002" name="Plant J.">
        <title>Identification of Ku70 and Ku80 homologues in Arabidopsis thaliana: evidence for a role in the repair of DNA double-strand breaks.</title>
        <authorList>
            <person name="Tamura K."/>
            <person name="Adachi Y."/>
            <person name="Chiba K."/>
            <person name="Oguchi K."/>
            <person name="Takahashi H."/>
        </authorList>
    </citation>
    <scope>NUCLEOTIDE SEQUENCE [MRNA]</scope>
    <scope>INDUCTION</scope>
    <scope>SUBCELLULAR LOCATION</scope>
    <scope>TISSUE SPECIFICITY</scope>
    <scope>INTERACTION WITH KU70</scope>
    <source>
        <strain>cv. Columbia</strain>
    </source>
</reference>
<reference key="2">
    <citation type="journal article" date="2000" name="Nature">
        <title>Sequence and analysis of chromosome 1 of the plant Arabidopsis thaliana.</title>
        <authorList>
            <person name="Theologis A."/>
            <person name="Ecker J.R."/>
            <person name="Palm C.J."/>
            <person name="Federspiel N.A."/>
            <person name="Kaul S."/>
            <person name="White O."/>
            <person name="Alonso J."/>
            <person name="Altafi H."/>
            <person name="Araujo R."/>
            <person name="Bowman C.L."/>
            <person name="Brooks S.Y."/>
            <person name="Buehler E."/>
            <person name="Chan A."/>
            <person name="Chao Q."/>
            <person name="Chen H."/>
            <person name="Cheuk R.F."/>
            <person name="Chin C.W."/>
            <person name="Chung M.K."/>
            <person name="Conn L."/>
            <person name="Conway A.B."/>
            <person name="Conway A.R."/>
            <person name="Creasy T.H."/>
            <person name="Dewar K."/>
            <person name="Dunn P."/>
            <person name="Etgu P."/>
            <person name="Feldblyum T.V."/>
            <person name="Feng J.-D."/>
            <person name="Fong B."/>
            <person name="Fujii C.Y."/>
            <person name="Gill J.E."/>
            <person name="Goldsmith A.D."/>
            <person name="Haas B."/>
            <person name="Hansen N.F."/>
            <person name="Hughes B."/>
            <person name="Huizar L."/>
            <person name="Hunter J.L."/>
            <person name="Jenkins J."/>
            <person name="Johnson-Hopson C."/>
            <person name="Khan S."/>
            <person name="Khaykin E."/>
            <person name="Kim C.J."/>
            <person name="Koo H.L."/>
            <person name="Kremenetskaia I."/>
            <person name="Kurtz D.B."/>
            <person name="Kwan A."/>
            <person name="Lam B."/>
            <person name="Langin-Hooper S."/>
            <person name="Lee A."/>
            <person name="Lee J.M."/>
            <person name="Lenz C.A."/>
            <person name="Li J.H."/>
            <person name="Li Y.-P."/>
            <person name="Lin X."/>
            <person name="Liu S.X."/>
            <person name="Liu Z.A."/>
            <person name="Luros J.S."/>
            <person name="Maiti R."/>
            <person name="Marziali A."/>
            <person name="Militscher J."/>
            <person name="Miranda M."/>
            <person name="Nguyen M."/>
            <person name="Nierman W.C."/>
            <person name="Osborne B.I."/>
            <person name="Pai G."/>
            <person name="Peterson J."/>
            <person name="Pham P.K."/>
            <person name="Rizzo M."/>
            <person name="Rooney T."/>
            <person name="Rowley D."/>
            <person name="Sakano H."/>
            <person name="Salzberg S.L."/>
            <person name="Schwartz J.R."/>
            <person name="Shinn P."/>
            <person name="Southwick A.M."/>
            <person name="Sun H."/>
            <person name="Tallon L.J."/>
            <person name="Tambunga G."/>
            <person name="Toriumi M.J."/>
            <person name="Town C.D."/>
            <person name="Utterback T."/>
            <person name="Van Aken S."/>
            <person name="Vaysberg M."/>
            <person name="Vysotskaia V.S."/>
            <person name="Walker M."/>
            <person name="Wu D."/>
            <person name="Yu G."/>
            <person name="Fraser C.M."/>
            <person name="Venter J.C."/>
            <person name="Davis R.W."/>
        </authorList>
    </citation>
    <scope>NUCLEOTIDE SEQUENCE [LARGE SCALE GENOMIC DNA]</scope>
    <source>
        <strain>cv. Columbia</strain>
    </source>
</reference>
<reference key="3">
    <citation type="journal article" date="2017" name="Plant J.">
        <title>Araport11: a complete reannotation of the Arabidopsis thaliana reference genome.</title>
        <authorList>
            <person name="Cheng C.Y."/>
            <person name="Krishnakumar V."/>
            <person name="Chan A.P."/>
            <person name="Thibaud-Nissen F."/>
            <person name="Schobel S."/>
            <person name="Town C.D."/>
        </authorList>
    </citation>
    <scope>GENOME REANNOTATION</scope>
    <source>
        <strain>cv. Columbia</strain>
    </source>
</reference>
<reference key="4">
    <citation type="journal article" date="2002" name="EMBO J.">
        <title>Telomere length deregulation and enhanced sensitivity to genotoxic stress in Arabidopsis mutants deficient in Ku70.</title>
        <authorList>
            <person name="Riha K."/>
            <person name="Watson J.M."/>
            <person name="Parkey J."/>
            <person name="Shippen D.E."/>
        </authorList>
    </citation>
    <scope>FUNCTION</scope>
    <scope>TISSUE SPECIFICITY</scope>
    <scope>INTERACTION WITH KU70</scope>
</reference>
<reference key="5">
    <citation type="journal article" date="2002" name="Plant J.">
        <title>Disruption of the Arabidopsis AtKu80 gene demonstrates an essential role for AtKu80 protein in efficient repair of DNA double-strand breaks in vivo.</title>
        <authorList>
            <person name="West C.E."/>
            <person name="Waterworth W.M."/>
            <person name="Story G.W."/>
            <person name="Sunderland P.A."/>
            <person name="Jiang Q."/>
            <person name="Bray C.M."/>
        </authorList>
    </citation>
    <scope>FUNCTION</scope>
    <scope>INTERACTION WITH KU70</scope>
    <scope>DISRUPTION PHENOTYPE</scope>
</reference>
<reference key="6">
    <citation type="journal article" date="2003" name="Plant Cell">
        <title>Telomerase dependence of telomere lengthening in Ku80 mutant Arabidopsis.</title>
        <authorList>
            <person name="Gallego M.E."/>
            <person name="Jalut N."/>
            <person name="White C.I."/>
        </authorList>
    </citation>
    <scope>FUNCTION</scope>
    <scope>DISRUPTION PHENOTYPE</scope>
</reference>
<reference key="7">
    <citation type="journal article" date="2003" name="Plant J.">
        <title>Ku80- and DNA ligase IV-deficient plants are sensitive to ionizing radiation and defective in T-DNA integration.</title>
        <authorList>
            <person name="Friesner J."/>
            <person name="Britt A.B."/>
        </authorList>
    </citation>
    <scope>DISRUPTION PHENOTYPE</scope>
</reference>
<reference key="8">
    <citation type="journal article" date="2005" name="Nucleic Acids Res.">
        <title>A conserved and species-specific functional interaction between the Werner syndrome-like exonuclease atWEX and the Ku heterodimer in Arabidopsis.</title>
        <authorList>
            <person name="Li B."/>
            <person name="Conway N."/>
            <person name="Navarro S."/>
            <person name="Comai L."/>
            <person name="Comai L."/>
        </authorList>
    </citation>
    <scope>INTERACTION WITH WEX</scope>
</reference>
<reference key="9">
    <citation type="journal article" date="2005" name="Proc. Natl. Acad. Sci. U.S.A.">
        <title>Involvement of KU80 in T-DNA integration in plant cells.</title>
        <authorList>
            <person name="Li J."/>
            <person name="Vaidya M."/>
            <person name="White C."/>
            <person name="Vainstein A."/>
            <person name="Citovsky V."/>
            <person name="Tzfira T."/>
        </authorList>
    </citation>
    <scope>FUNCTION</scope>
    <scope>DISRUPTION PHENOTYPE</scope>
</reference>
<reference key="10">
    <citation type="journal article" date="2008" name="Biochim. Biophys. Acta">
        <title>Regulation of Arabidopsis thaliana Ku genes at different developmental stages under heat stress.</title>
        <authorList>
            <person name="Liu P.F."/>
            <person name="Wang Y.K."/>
            <person name="Chang W.C."/>
            <person name="Chang H.Y."/>
            <person name="Pan R.L."/>
        </authorList>
    </citation>
    <scope>INDUCTION BY HEAT SHOCK</scope>
</reference>
<name>KU80_ARATH</name>
<accession>Q9FQ09</accession>
<accession>Q9C7Z3</accession>
<accession>Q9LNF5</accession>
<gene>
    <name type="primary">KU80</name>
    <name type="ordered locus">At1g48050</name>
    <name type="ORF">F21D18.26</name>
    <name type="ORF">T2J15.4</name>
</gene>
<dbReference type="EC" id="3.6.4.12"/>
<dbReference type="EMBL" id="AF283758">
    <property type="protein sequence ID" value="AAG44851.1"/>
    <property type="molecule type" value="mRNA"/>
</dbReference>
<dbReference type="EMBL" id="AC023673">
    <property type="protein sequence ID" value="AAF79532.1"/>
    <property type="status" value="ALT_SEQ"/>
    <property type="molecule type" value="Genomic_DNA"/>
</dbReference>
<dbReference type="EMBL" id="AC051631">
    <property type="protein sequence ID" value="AAG51535.1"/>
    <property type="status" value="ALT_SEQ"/>
    <property type="molecule type" value="Genomic_DNA"/>
</dbReference>
<dbReference type="EMBL" id="CP002684">
    <property type="protein sequence ID" value="AEE32242.1"/>
    <property type="molecule type" value="Genomic_DNA"/>
</dbReference>
<dbReference type="PIR" id="G96520">
    <property type="entry name" value="G96520"/>
</dbReference>
<dbReference type="RefSeq" id="NP_564520.1">
    <property type="nucleotide sequence ID" value="NM_103701.2"/>
</dbReference>
<dbReference type="SMR" id="Q9FQ09"/>
<dbReference type="BioGRID" id="26448">
    <property type="interactions" value="7"/>
</dbReference>
<dbReference type="FunCoup" id="Q9FQ09">
    <property type="interactions" value="3677"/>
</dbReference>
<dbReference type="IntAct" id="Q9FQ09">
    <property type="interactions" value="1"/>
</dbReference>
<dbReference type="STRING" id="3702.Q9FQ09"/>
<dbReference type="iPTMnet" id="Q9FQ09"/>
<dbReference type="PaxDb" id="3702-AT1G48050.1"/>
<dbReference type="ProteomicsDB" id="250714"/>
<dbReference type="EnsemblPlants" id="AT1G48050.1">
    <property type="protein sequence ID" value="AT1G48050.1"/>
    <property type="gene ID" value="AT1G48050"/>
</dbReference>
<dbReference type="GeneID" id="841223"/>
<dbReference type="Gramene" id="AT1G48050.1">
    <property type="protein sequence ID" value="AT1G48050.1"/>
    <property type="gene ID" value="AT1G48050"/>
</dbReference>
<dbReference type="KEGG" id="ath:AT1G48050"/>
<dbReference type="Araport" id="AT1G48050"/>
<dbReference type="TAIR" id="AT1G48050">
    <property type="gene designation" value="KU80"/>
</dbReference>
<dbReference type="eggNOG" id="KOG2326">
    <property type="taxonomic scope" value="Eukaryota"/>
</dbReference>
<dbReference type="HOGENOM" id="CLU_010975_2_2_1"/>
<dbReference type="InParanoid" id="Q9FQ09"/>
<dbReference type="PhylomeDB" id="Q9FQ09"/>
<dbReference type="PRO" id="PR:Q9FQ09"/>
<dbReference type="Proteomes" id="UP000006548">
    <property type="component" value="Chromosome 1"/>
</dbReference>
<dbReference type="ExpressionAtlas" id="Q9FQ09">
    <property type="expression patterns" value="baseline and differential"/>
</dbReference>
<dbReference type="GO" id="GO:0005737">
    <property type="term" value="C:cytoplasm"/>
    <property type="evidence" value="ECO:0007669"/>
    <property type="project" value="UniProtKB-SubCell"/>
</dbReference>
<dbReference type="GO" id="GO:0043564">
    <property type="term" value="C:Ku70:Ku80 complex"/>
    <property type="evidence" value="ECO:0007669"/>
    <property type="project" value="InterPro"/>
</dbReference>
<dbReference type="GO" id="GO:0005524">
    <property type="term" value="F:ATP binding"/>
    <property type="evidence" value="ECO:0007669"/>
    <property type="project" value="UniProtKB-KW"/>
</dbReference>
<dbReference type="GO" id="GO:0016887">
    <property type="term" value="F:ATP hydrolysis activity"/>
    <property type="evidence" value="ECO:0007669"/>
    <property type="project" value="RHEA"/>
</dbReference>
<dbReference type="GO" id="GO:0003684">
    <property type="term" value="F:damaged DNA binding"/>
    <property type="evidence" value="ECO:0007669"/>
    <property type="project" value="InterPro"/>
</dbReference>
<dbReference type="GO" id="GO:0003678">
    <property type="term" value="F:DNA helicase activity"/>
    <property type="evidence" value="ECO:0007669"/>
    <property type="project" value="InterPro"/>
</dbReference>
<dbReference type="GO" id="GO:0003690">
    <property type="term" value="F:double-stranded DNA binding"/>
    <property type="evidence" value="ECO:0000314"/>
    <property type="project" value="TAIR"/>
</dbReference>
<dbReference type="GO" id="GO:0042162">
    <property type="term" value="F:telomeric DNA binding"/>
    <property type="evidence" value="ECO:0007669"/>
    <property type="project" value="InterPro"/>
</dbReference>
<dbReference type="GO" id="GO:0015074">
    <property type="term" value="P:DNA integration"/>
    <property type="evidence" value="ECO:0000304"/>
    <property type="project" value="TAIR"/>
</dbReference>
<dbReference type="GO" id="GO:0006310">
    <property type="term" value="P:DNA recombination"/>
    <property type="evidence" value="ECO:0007669"/>
    <property type="project" value="UniProtKB-KW"/>
</dbReference>
<dbReference type="GO" id="GO:0006281">
    <property type="term" value="P:DNA repair"/>
    <property type="evidence" value="ECO:0000304"/>
    <property type="project" value="TAIR"/>
</dbReference>
<dbReference type="GO" id="GO:0006302">
    <property type="term" value="P:double-strand break repair"/>
    <property type="evidence" value="ECO:0000315"/>
    <property type="project" value="TAIR"/>
</dbReference>
<dbReference type="GO" id="GO:0006303">
    <property type="term" value="P:double-strand break repair via nonhomologous end joining"/>
    <property type="evidence" value="ECO:0000315"/>
    <property type="project" value="TAIR"/>
</dbReference>
<dbReference type="GO" id="GO:0009408">
    <property type="term" value="P:response to heat"/>
    <property type="evidence" value="ECO:0000270"/>
    <property type="project" value="TAIR"/>
</dbReference>
<dbReference type="GO" id="GO:0000723">
    <property type="term" value="P:telomere maintenance"/>
    <property type="evidence" value="ECO:0000304"/>
    <property type="project" value="TAIR"/>
</dbReference>
<dbReference type="CDD" id="cd00873">
    <property type="entry name" value="KU80"/>
    <property type="match status" value="1"/>
</dbReference>
<dbReference type="FunFam" id="2.40.290.10:FF:000006">
    <property type="entry name" value="ATP-dependent DNA helicase 2 subunit KU80"/>
    <property type="match status" value="1"/>
</dbReference>
<dbReference type="FunFam" id="3.40.50.410:FF:000102">
    <property type="entry name" value="ATP-dependent DNA helicase 2 subunit KU80"/>
    <property type="match status" value="1"/>
</dbReference>
<dbReference type="FunFam" id="1.10.1600.10:FF:000002">
    <property type="entry name" value="X-ray repair cross-complementing protein 5"/>
    <property type="match status" value="1"/>
</dbReference>
<dbReference type="FunFam" id="1.25.40.240:FF:000001">
    <property type="entry name" value="X-ray repair cross-complementing protein 5"/>
    <property type="match status" value="1"/>
</dbReference>
<dbReference type="Gene3D" id="1.10.1600.10">
    <property type="match status" value="1"/>
</dbReference>
<dbReference type="Gene3D" id="2.40.290.10">
    <property type="match status" value="1"/>
</dbReference>
<dbReference type="Gene3D" id="1.25.40.240">
    <property type="entry name" value="Ku, C-terminal domain"/>
    <property type="match status" value="1"/>
</dbReference>
<dbReference type="Gene3D" id="3.40.50.410">
    <property type="entry name" value="von Willebrand factor, type A domain"/>
    <property type="match status" value="1"/>
</dbReference>
<dbReference type="InterPro" id="IPR006164">
    <property type="entry name" value="Ku70/Ku80_beta-barrel_dom"/>
</dbReference>
<dbReference type="InterPro" id="IPR024193">
    <property type="entry name" value="Ku80"/>
</dbReference>
<dbReference type="InterPro" id="IPR005160">
    <property type="entry name" value="Ku_C"/>
</dbReference>
<dbReference type="InterPro" id="IPR036494">
    <property type="entry name" value="Ku_C_sf"/>
</dbReference>
<dbReference type="InterPro" id="IPR005161">
    <property type="entry name" value="Ku_N"/>
</dbReference>
<dbReference type="InterPro" id="IPR014893">
    <property type="entry name" value="Ku_PK_bind"/>
</dbReference>
<dbReference type="InterPro" id="IPR016194">
    <property type="entry name" value="SPOC-like_C_dom_sf"/>
</dbReference>
<dbReference type="InterPro" id="IPR036465">
    <property type="entry name" value="vWFA_dom_sf"/>
</dbReference>
<dbReference type="PANTHER" id="PTHR12604">
    <property type="entry name" value="KU AUTOANTIGEN DNA HELICASE"/>
    <property type="match status" value="1"/>
</dbReference>
<dbReference type="PANTHER" id="PTHR12604:SF4">
    <property type="entry name" value="X-RAY REPAIR CROSS-COMPLEMENTING PROTEIN 5"/>
    <property type="match status" value="1"/>
</dbReference>
<dbReference type="Pfam" id="PF02735">
    <property type="entry name" value="Ku"/>
    <property type="match status" value="1"/>
</dbReference>
<dbReference type="Pfam" id="PF03730">
    <property type="entry name" value="Ku_C"/>
    <property type="match status" value="1"/>
</dbReference>
<dbReference type="Pfam" id="PF03731">
    <property type="entry name" value="Ku_N"/>
    <property type="match status" value="1"/>
</dbReference>
<dbReference type="Pfam" id="PF08785">
    <property type="entry name" value="Ku_PK_bind"/>
    <property type="match status" value="1"/>
</dbReference>
<dbReference type="PIRSF" id="PIRSF016570">
    <property type="entry name" value="Ku80"/>
    <property type="match status" value="1"/>
</dbReference>
<dbReference type="SMART" id="SM00559">
    <property type="entry name" value="Ku78"/>
    <property type="match status" value="1"/>
</dbReference>
<dbReference type="SUPFAM" id="SSF101420">
    <property type="entry name" value="C-terminal domain of Ku80"/>
    <property type="match status" value="1"/>
</dbReference>
<dbReference type="SUPFAM" id="SSF100939">
    <property type="entry name" value="SPOC domain-like"/>
    <property type="match status" value="1"/>
</dbReference>
<dbReference type="SUPFAM" id="SSF53300">
    <property type="entry name" value="vWA-like"/>
    <property type="match status" value="1"/>
</dbReference>
<keyword id="KW-0067">ATP-binding</keyword>
<keyword id="KW-0963">Cytoplasm</keyword>
<keyword id="KW-0227">DNA damage</keyword>
<keyword id="KW-0233">DNA recombination</keyword>
<keyword id="KW-0234">DNA repair</keyword>
<keyword id="KW-0238">DNA-binding</keyword>
<keyword id="KW-0347">Helicase</keyword>
<keyword id="KW-0378">Hydrolase</keyword>
<keyword id="KW-0547">Nucleotide-binding</keyword>
<keyword id="KW-0539">Nucleus</keyword>
<keyword id="KW-1185">Reference proteome</keyword>
<evidence type="ECO:0000269" key="1">
    <source>
    </source>
</evidence>
<evidence type="ECO:0000269" key="2">
    <source>
    </source>
</evidence>
<evidence type="ECO:0000269" key="3">
    <source>
    </source>
</evidence>
<evidence type="ECO:0000269" key="4">
    <source>
    </source>
</evidence>
<evidence type="ECO:0000269" key="5">
    <source>
    </source>
</evidence>
<evidence type="ECO:0000269" key="6">
    <source>
    </source>
</evidence>
<evidence type="ECO:0000269" key="7">
    <source>
    </source>
</evidence>
<evidence type="ECO:0000269" key="8">
    <source>
    </source>
</evidence>
<evidence type="ECO:0000305" key="9"/>
<sequence>MARNREGLVLVLDVGPAMRSVLPDVEKACSMLLQKKLIYNKYDEVGIVVFGTEETGNELAREIGGYENVTVLRNIRVVDELAAEHVKQLPRGTVAGDFLDALIVGMDMLIKMYGNAHKGKKRMCLITNAACPTKDPFEGTKDDQVSTIAMKMAAEGIKMESIVMRSNLSGDAHERVIEENDHLLTLFSSNAIAKTVNVDSPLSLLGSLKTRRVAPVTLFRGDLEINPTMKIKVWVYKKVAEERLPTLKMYSDKAPPTDKFAKHEVKVDYDYKVTAESTEVIAPEERIKGFRYGPQVIPISPDQIETLKFKTDKGMKLLGFTEASNILRHYYMKDVNIVVPDPSKEKSVLAVSAIAREMKETNKVAIVRCVWRNGQGNVVVGVLTPNVSERDDTPDSFYFNVLPFAEDVREFPFPSFNKLPSSWKPDEQQQAVADNLVKMLDLAPSAEEEVLKPDLTPNPVLQRFYEYLELKSKSTDATLPPMDGTFKRLMEQDPELSSNNKSIMDTFRGSFEVKENPKLKKASKRLLRDKPSGSDDEDNRMITYDAKENKIDIVGDANPIQDFEAMISRRDKTDWTEKAITQMKNLIMKLVENCTDEGDKALECVLALRKGCVLEQEPKQFNEFLNHLFKLCQERNLSHLLEHFMSKKITLIPKSEAADSDIVDENAGDFIVKQESMLES</sequence>